<proteinExistence type="inferred from homology"/>
<comment type="function">
    <text evidence="1">This protein binds to 23S rRNA in the presence of protein L20.</text>
</comment>
<comment type="subunit">
    <text evidence="1">Part of the 50S ribosomal subunit. Contacts protein L20.</text>
</comment>
<comment type="similarity">
    <text evidence="1">Belongs to the bacterial ribosomal protein bL21 family.</text>
</comment>
<gene>
    <name evidence="1" type="primary">rplU</name>
    <name type="ordered locus">MS53_0551</name>
</gene>
<protein>
    <recommendedName>
        <fullName evidence="1">Large ribosomal subunit protein bL21</fullName>
    </recommendedName>
    <alternativeName>
        <fullName evidence="2">50S ribosomal protein L21</fullName>
    </alternativeName>
</protein>
<sequence length="100" mass="11232">MFAIIETGGKQILVKEGDSIYVEKLEGQEKSEVKFDKVLAVNDVFGKPYVTGAVVHGTIEKQGKAKKIVVYRHNPKSTHKRKLGHRQPYTLVKITKIKGK</sequence>
<name>RL21_MYCS5</name>
<evidence type="ECO:0000255" key="1">
    <source>
        <dbReference type="HAMAP-Rule" id="MF_01363"/>
    </source>
</evidence>
<evidence type="ECO:0000305" key="2"/>
<reference key="1">
    <citation type="journal article" date="2005" name="J. Bacteriol.">
        <title>Swine and poultry pathogens: the complete genome sequences of two strains of Mycoplasma hyopneumoniae and a strain of Mycoplasma synoviae.</title>
        <authorList>
            <person name="Vasconcelos A.T.R."/>
            <person name="Ferreira H.B."/>
            <person name="Bizarro C.V."/>
            <person name="Bonatto S.L."/>
            <person name="Carvalho M.O."/>
            <person name="Pinto P.M."/>
            <person name="Almeida D.F."/>
            <person name="Almeida L.G.P."/>
            <person name="Almeida R."/>
            <person name="Alves-Junior L."/>
            <person name="Assuncao E.N."/>
            <person name="Azevedo V.A.C."/>
            <person name="Bogo M.R."/>
            <person name="Brigido M.M."/>
            <person name="Brocchi M."/>
            <person name="Burity H.A."/>
            <person name="Camargo A.A."/>
            <person name="Camargo S.S."/>
            <person name="Carepo M.S."/>
            <person name="Carraro D.M."/>
            <person name="de Mattos Cascardo J.C."/>
            <person name="Castro L.A."/>
            <person name="Cavalcanti G."/>
            <person name="Chemale G."/>
            <person name="Collevatti R.G."/>
            <person name="Cunha C.W."/>
            <person name="Dallagiovanna B."/>
            <person name="Dambros B.P."/>
            <person name="Dellagostin O.A."/>
            <person name="Falcao C."/>
            <person name="Fantinatti-Garboggini F."/>
            <person name="Felipe M.S.S."/>
            <person name="Fiorentin L."/>
            <person name="Franco G.R."/>
            <person name="Freitas N.S.A."/>
            <person name="Frias D."/>
            <person name="Grangeiro T.B."/>
            <person name="Grisard E.C."/>
            <person name="Guimaraes C.T."/>
            <person name="Hungria M."/>
            <person name="Jardim S.N."/>
            <person name="Krieger M.A."/>
            <person name="Laurino J.P."/>
            <person name="Lima L.F.A."/>
            <person name="Lopes M.I."/>
            <person name="Loreto E.L.S."/>
            <person name="Madeira H.M.F."/>
            <person name="Manfio G.P."/>
            <person name="Maranhao A.Q."/>
            <person name="Martinkovics C.T."/>
            <person name="Medeiros S.R.B."/>
            <person name="Moreira M.A.M."/>
            <person name="Neiva M."/>
            <person name="Ramalho-Neto C.E."/>
            <person name="Nicolas M.F."/>
            <person name="Oliveira S.C."/>
            <person name="Paixao R.F.C."/>
            <person name="Pedrosa F.O."/>
            <person name="Pena S.D.J."/>
            <person name="Pereira M."/>
            <person name="Pereira-Ferrari L."/>
            <person name="Piffer I."/>
            <person name="Pinto L.S."/>
            <person name="Potrich D.P."/>
            <person name="Salim A.C.M."/>
            <person name="Santos F.R."/>
            <person name="Schmitt R."/>
            <person name="Schneider M.P.C."/>
            <person name="Schrank A."/>
            <person name="Schrank I.S."/>
            <person name="Schuck A.F."/>
            <person name="Seuanez H.N."/>
            <person name="Silva D.W."/>
            <person name="Silva R."/>
            <person name="Silva S.C."/>
            <person name="Soares C.M.A."/>
            <person name="Souza K.R.L."/>
            <person name="Souza R.C."/>
            <person name="Staats C.C."/>
            <person name="Steffens M.B.R."/>
            <person name="Teixeira S.M.R."/>
            <person name="Urmenyi T.P."/>
            <person name="Vainstein M.H."/>
            <person name="Zuccherato L.W."/>
            <person name="Simpson A.J.G."/>
            <person name="Zaha A."/>
        </authorList>
    </citation>
    <scope>NUCLEOTIDE SEQUENCE [LARGE SCALE GENOMIC DNA]</scope>
    <source>
        <strain>53</strain>
    </source>
</reference>
<dbReference type="EMBL" id="AE017245">
    <property type="protein sequence ID" value="AAZ43959.2"/>
    <property type="molecule type" value="Genomic_DNA"/>
</dbReference>
<dbReference type="RefSeq" id="WP_011283688.1">
    <property type="nucleotide sequence ID" value="NC_007294.1"/>
</dbReference>
<dbReference type="SMR" id="Q4A5L2"/>
<dbReference type="STRING" id="262723.MS53_0551"/>
<dbReference type="GeneID" id="93530334"/>
<dbReference type="KEGG" id="msy:MS53_0551"/>
<dbReference type="eggNOG" id="COG0261">
    <property type="taxonomic scope" value="Bacteria"/>
</dbReference>
<dbReference type="HOGENOM" id="CLU_061463_3_1_14"/>
<dbReference type="OrthoDB" id="9813334at2"/>
<dbReference type="Proteomes" id="UP000000549">
    <property type="component" value="Chromosome"/>
</dbReference>
<dbReference type="GO" id="GO:0005737">
    <property type="term" value="C:cytoplasm"/>
    <property type="evidence" value="ECO:0007669"/>
    <property type="project" value="UniProtKB-ARBA"/>
</dbReference>
<dbReference type="GO" id="GO:1990904">
    <property type="term" value="C:ribonucleoprotein complex"/>
    <property type="evidence" value="ECO:0007669"/>
    <property type="project" value="UniProtKB-KW"/>
</dbReference>
<dbReference type="GO" id="GO:0005840">
    <property type="term" value="C:ribosome"/>
    <property type="evidence" value="ECO:0007669"/>
    <property type="project" value="UniProtKB-KW"/>
</dbReference>
<dbReference type="GO" id="GO:0019843">
    <property type="term" value="F:rRNA binding"/>
    <property type="evidence" value="ECO:0007669"/>
    <property type="project" value="UniProtKB-UniRule"/>
</dbReference>
<dbReference type="GO" id="GO:0003735">
    <property type="term" value="F:structural constituent of ribosome"/>
    <property type="evidence" value="ECO:0007669"/>
    <property type="project" value="InterPro"/>
</dbReference>
<dbReference type="GO" id="GO:0006412">
    <property type="term" value="P:translation"/>
    <property type="evidence" value="ECO:0007669"/>
    <property type="project" value="UniProtKB-UniRule"/>
</dbReference>
<dbReference type="HAMAP" id="MF_01363">
    <property type="entry name" value="Ribosomal_bL21"/>
    <property type="match status" value="1"/>
</dbReference>
<dbReference type="InterPro" id="IPR028909">
    <property type="entry name" value="bL21-like"/>
</dbReference>
<dbReference type="InterPro" id="IPR036164">
    <property type="entry name" value="bL21-like_sf"/>
</dbReference>
<dbReference type="InterPro" id="IPR001787">
    <property type="entry name" value="Ribosomal_bL21"/>
</dbReference>
<dbReference type="NCBIfam" id="TIGR00061">
    <property type="entry name" value="L21"/>
    <property type="match status" value="1"/>
</dbReference>
<dbReference type="PANTHER" id="PTHR21349">
    <property type="entry name" value="50S RIBOSOMAL PROTEIN L21"/>
    <property type="match status" value="1"/>
</dbReference>
<dbReference type="PANTHER" id="PTHR21349:SF0">
    <property type="entry name" value="LARGE RIBOSOMAL SUBUNIT PROTEIN BL21M"/>
    <property type="match status" value="1"/>
</dbReference>
<dbReference type="Pfam" id="PF00829">
    <property type="entry name" value="Ribosomal_L21p"/>
    <property type="match status" value="1"/>
</dbReference>
<dbReference type="SUPFAM" id="SSF141091">
    <property type="entry name" value="L21p-like"/>
    <property type="match status" value="1"/>
</dbReference>
<organism>
    <name type="scientific">Mycoplasmopsis synoviae (strain 53)</name>
    <name type="common">Mycoplasma synoviae</name>
    <dbReference type="NCBI Taxonomy" id="262723"/>
    <lineage>
        <taxon>Bacteria</taxon>
        <taxon>Bacillati</taxon>
        <taxon>Mycoplasmatota</taxon>
        <taxon>Mycoplasmoidales</taxon>
        <taxon>Metamycoplasmataceae</taxon>
        <taxon>Mycoplasmopsis</taxon>
    </lineage>
</organism>
<feature type="chain" id="PRO_0000270695" description="Large ribosomal subunit protein bL21">
    <location>
        <begin position="1"/>
        <end position="100"/>
    </location>
</feature>
<accession>Q4A5L2</accession>
<keyword id="KW-1185">Reference proteome</keyword>
<keyword id="KW-0687">Ribonucleoprotein</keyword>
<keyword id="KW-0689">Ribosomal protein</keyword>
<keyword id="KW-0694">RNA-binding</keyword>
<keyword id="KW-0699">rRNA-binding</keyword>